<feature type="chain" id="PRO_0000113684" description="Serine hydroxymethyltransferase">
    <location>
        <begin position="1"/>
        <end position="427"/>
    </location>
</feature>
<feature type="binding site" evidence="1">
    <location>
        <position position="118"/>
    </location>
    <ligand>
        <name>(6S)-5,6,7,8-tetrahydrofolate</name>
        <dbReference type="ChEBI" id="CHEBI:57453"/>
    </ligand>
</feature>
<feature type="binding site" evidence="1">
    <location>
        <begin position="122"/>
        <end position="124"/>
    </location>
    <ligand>
        <name>(6S)-5,6,7,8-tetrahydrofolate</name>
        <dbReference type="ChEBI" id="CHEBI:57453"/>
    </ligand>
</feature>
<feature type="binding site" evidence="1">
    <location>
        <position position="243"/>
    </location>
    <ligand>
        <name>(6S)-5,6,7,8-tetrahydrofolate</name>
        <dbReference type="ChEBI" id="CHEBI:57453"/>
    </ligand>
</feature>
<feature type="binding site" evidence="1">
    <location>
        <begin position="351"/>
        <end position="353"/>
    </location>
    <ligand>
        <name>(6S)-5,6,7,8-tetrahydrofolate</name>
        <dbReference type="ChEBI" id="CHEBI:57453"/>
    </ligand>
</feature>
<feature type="site" description="Plays an important role in substrate specificity" evidence="1">
    <location>
        <position position="226"/>
    </location>
</feature>
<feature type="modified residue" description="N6-(pyridoxal phosphate)lysine" evidence="1">
    <location>
        <position position="227"/>
    </location>
</feature>
<comment type="function">
    <text evidence="1">Catalyzes the reversible interconversion of serine and glycine with tetrahydrofolate (THF) serving as the one-carbon carrier. This reaction serves as the major source of one-carbon groups required for the biosynthesis of purines, thymidylate, methionine, and other important biomolecules. Also exhibits THF-independent aldolase activity toward beta-hydroxyamino acids, producing glycine and aldehydes, via a retro-aldol mechanism.</text>
</comment>
<comment type="catalytic activity">
    <reaction evidence="1">
        <text>(6R)-5,10-methylene-5,6,7,8-tetrahydrofolate + glycine + H2O = (6S)-5,6,7,8-tetrahydrofolate + L-serine</text>
        <dbReference type="Rhea" id="RHEA:15481"/>
        <dbReference type="ChEBI" id="CHEBI:15377"/>
        <dbReference type="ChEBI" id="CHEBI:15636"/>
        <dbReference type="ChEBI" id="CHEBI:33384"/>
        <dbReference type="ChEBI" id="CHEBI:57305"/>
        <dbReference type="ChEBI" id="CHEBI:57453"/>
        <dbReference type="EC" id="2.1.2.1"/>
    </reaction>
</comment>
<comment type="cofactor">
    <cofactor evidence="1">
        <name>pyridoxal 5'-phosphate</name>
        <dbReference type="ChEBI" id="CHEBI:597326"/>
    </cofactor>
</comment>
<comment type="pathway">
    <text evidence="1">One-carbon metabolism; tetrahydrofolate interconversion.</text>
</comment>
<comment type="pathway">
    <text evidence="1">Amino-acid biosynthesis; glycine biosynthesis; glycine from L-serine: step 1/1.</text>
</comment>
<comment type="subunit">
    <text evidence="1">Homodimer.</text>
</comment>
<comment type="subcellular location">
    <subcellularLocation>
        <location evidence="1">Cytoplasm</location>
    </subcellularLocation>
</comment>
<comment type="similarity">
    <text evidence="1">Belongs to the SHMT family.</text>
</comment>
<gene>
    <name evidence="1" type="primary">glyA</name>
    <name type="ordered locus">TM_0720</name>
</gene>
<organism>
    <name type="scientific">Thermotoga maritima (strain ATCC 43589 / DSM 3109 / JCM 10099 / NBRC 100826 / MSB8)</name>
    <dbReference type="NCBI Taxonomy" id="243274"/>
    <lineage>
        <taxon>Bacteria</taxon>
        <taxon>Thermotogati</taxon>
        <taxon>Thermotogota</taxon>
        <taxon>Thermotogae</taxon>
        <taxon>Thermotogales</taxon>
        <taxon>Thermotogaceae</taxon>
        <taxon>Thermotoga</taxon>
    </lineage>
</organism>
<accession>Q9WZH9</accession>
<keyword id="KW-0028">Amino-acid biosynthesis</keyword>
<keyword id="KW-0963">Cytoplasm</keyword>
<keyword id="KW-0554">One-carbon metabolism</keyword>
<keyword id="KW-0663">Pyridoxal phosphate</keyword>
<keyword id="KW-1185">Reference proteome</keyword>
<keyword id="KW-0808">Transferase</keyword>
<evidence type="ECO:0000255" key="1">
    <source>
        <dbReference type="HAMAP-Rule" id="MF_00051"/>
    </source>
</evidence>
<proteinExistence type="inferred from homology"/>
<name>GLYA_THEMA</name>
<reference key="1">
    <citation type="journal article" date="1999" name="Nature">
        <title>Evidence for lateral gene transfer between Archaea and Bacteria from genome sequence of Thermotoga maritima.</title>
        <authorList>
            <person name="Nelson K.E."/>
            <person name="Clayton R.A."/>
            <person name="Gill S.R."/>
            <person name="Gwinn M.L."/>
            <person name="Dodson R.J."/>
            <person name="Haft D.H."/>
            <person name="Hickey E.K."/>
            <person name="Peterson J.D."/>
            <person name="Nelson W.C."/>
            <person name="Ketchum K.A."/>
            <person name="McDonald L.A."/>
            <person name="Utterback T.R."/>
            <person name="Malek J.A."/>
            <person name="Linher K.D."/>
            <person name="Garrett M.M."/>
            <person name="Stewart A.M."/>
            <person name="Cotton M.D."/>
            <person name="Pratt M.S."/>
            <person name="Phillips C.A."/>
            <person name="Richardson D.L."/>
            <person name="Heidelberg J.F."/>
            <person name="Sutton G.G."/>
            <person name="Fleischmann R.D."/>
            <person name="Eisen J.A."/>
            <person name="White O."/>
            <person name="Salzberg S.L."/>
            <person name="Smith H.O."/>
            <person name="Venter J.C."/>
            <person name="Fraser C.M."/>
        </authorList>
    </citation>
    <scope>NUCLEOTIDE SEQUENCE [LARGE SCALE GENOMIC DNA]</scope>
    <source>
        <strain>ATCC 43589 / DSM 3109 / JCM 10099 / NBRC 100826 / MSB8</strain>
    </source>
</reference>
<sequence>MWKHVKQVDPEIYEVLVNELKRQEYGLELIASENFASLAVIETMGSMLTNKYAEGYPKKRYYGGCEWVDRAEERAIERAKRLFGAKFANVQPHSGSQANMAVYLALAQPGDTIMGMSLSHGGHLTHGAPVNFSGKIFKVVPYGVNLETETIDYDEVRRLALEHKPKIIVAGGSAYARIIDFKRFREIADEVGAYLMVDMAHFAGLVAAGIHPNPLEYAHVVTSTTHKTLRGPRGGLILTNDPEIAKAVDKTIFPGIQGGPLMHVIAAKAVCFKEAMTEEFKEYQKQVVKNAKKMAEEFQKRGYRIVSGGTDTHLFLVDLTPKDITGKAAEKALESCGITVNKNTIPNEKRSPFVASGIRIGTPAVTTRGMKEEEMEEIAEMIDLVLSNVIDENGTVKPEVREEVSKKVRELCERFPLYRDKIEGVEI</sequence>
<protein>
    <recommendedName>
        <fullName evidence="1">Serine hydroxymethyltransferase</fullName>
        <shortName evidence="1">SHMT</shortName>
        <shortName evidence="1">Serine methylase</shortName>
        <ecNumber evidence="1">2.1.2.1</ecNumber>
    </recommendedName>
</protein>
<dbReference type="EC" id="2.1.2.1" evidence="1"/>
<dbReference type="EMBL" id="AE000512">
    <property type="protein sequence ID" value="AAD35802.1"/>
    <property type="molecule type" value="Genomic_DNA"/>
</dbReference>
<dbReference type="PIR" id="F72341">
    <property type="entry name" value="F72341"/>
</dbReference>
<dbReference type="RefSeq" id="NP_228529.1">
    <property type="nucleotide sequence ID" value="NC_000853.1"/>
</dbReference>
<dbReference type="RefSeq" id="WP_004081014.1">
    <property type="nucleotide sequence ID" value="NC_000853.1"/>
</dbReference>
<dbReference type="SMR" id="Q9WZH9"/>
<dbReference type="FunCoup" id="Q9WZH9">
    <property type="interactions" value="380"/>
</dbReference>
<dbReference type="STRING" id="243274.TM_0720"/>
<dbReference type="PaxDb" id="243274-THEMA_01060"/>
<dbReference type="EnsemblBacteria" id="AAD35802">
    <property type="protein sequence ID" value="AAD35802"/>
    <property type="gene ID" value="TM_0720"/>
</dbReference>
<dbReference type="KEGG" id="tma:TM0720"/>
<dbReference type="KEGG" id="tmi:THEMA_01060"/>
<dbReference type="KEGG" id="tmm:Tmari_0721"/>
<dbReference type="KEGG" id="tmw:THMA_0736"/>
<dbReference type="eggNOG" id="COG0112">
    <property type="taxonomic scope" value="Bacteria"/>
</dbReference>
<dbReference type="InParanoid" id="Q9WZH9"/>
<dbReference type="OrthoDB" id="9803846at2"/>
<dbReference type="UniPathway" id="UPA00193"/>
<dbReference type="UniPathway" id="UPA00288">
    <property type="reaction ID" value="UER01023"/>
</dbReference>
<dbReference type="Proteomes" id="UP000008183">
    <property type="component" value="Chromosome"/>
</dbReference>
<dbReference type="GO" id="GO:0005737">
    <property type="term" value="C:cytoplasm"/>
    <property type="evidence" value="ECO:0000318"/>
    <property type="project" value="GO_Central"/>
</dbReference>
<dbReference type="GO" id="GO:0005829">
    <property type="term" value="C:cytosol"/>
    <property type="evidence" value="ECO:0000318"/>
    <property type="project" value="GO_Central"/>
</dbReference>
<dbReference type="GO" id="GO:0004372">
    <property type="term" value="F:glycine hydroxymethyltransferase activity"/>
    <property type="evidence" value="ECO:0000318"/>
    <property type="project" value="GO_Central"/>
</dbReference>
<dbReference type="GO" id="GO:0030170">
    <property type="term" value="F:pyridoxal phosphate binding"/>
    <property type="evidence" value="ECO:0000318"/>
    <property type="project" value="GO_Central"/>
</dbReference>
<dbReference type="GO" id="GO:0019264">
    <property type="term" value="P:glycine biosynthetic process from serine"/>
    <property type="evidence" value="ECO:0000318"/>
    <property type="project" value="GO_Central"/>
</dbReference>
<dbReference type="GO" id="GO:0035999">
    <property type="term" value="P:tetrahydrofolate interconversion"/>
    <property type="evidence" value="ECO:0007669"/>
    <property type="project" value="UniProtKB-UniRule"/>
</dbReference>
<dbReference type="GO" id="GO:0046653">
    <property type="term" value="P:tetrahydrofolate metabolic process"/>
    <property type="evidence" value="ECO:0000318"/>
    <property type="project" value="GO_Central"/>
</dbReference>
<dbReference type="CDD" id="cd00378">
    <property type="entry name" value="SHMT"/>
    <property type="match status" value="1"/>
</dbReference>
<dbReference type="FunFam" id="3.40.640.10:FF:000001">
    <property type="entry name" value="Serine hydroxymethyltransferase"/>
    <property type="match status" value="1"/>
</dbReference>
<dbReference type="FunFam" id="3.90.1150.10:FF:000003">
    <property type="entry name" value="Serine hydroxymethyltransferase"/>
    <property type="match status" value="1"/>
</dbReference>
<dbReference type="Gene3D" id="3.90.1150.10">
    <property type="entry name" value="Aspartate Aminotransferase, domain 1"/>
    <property type="match status" value="1"/>
</dbReference>
<dbReference type="Gene3D" id="3.40.640.10">
    <property type="entry name" value="Type I PLP-dependent aspartate aminotransferase-like (Major domain)"/>
    <property type="match status" value="1"/>
</dbReference>
<dbReference type="HAMAP" id="MF_00051">
    <property type="entry name" value="SHMT"/>
    <property type="match status" value="1"/>
</dbReference>
<dbReference type="InterPro" id="IPR015424">
    <property type="entry name" value="PyrdxlP-dep_Trfase"/>
</dbReference>
<dbReference type="InterPro" id="IPR015421">
    <property type="entry name" value="PyrdxlP-dep_Trfase_major"/>
</dbReference>
<dbReference type="InterPro" id="IPR015422">
    <property type="entry name" value="PyrdxlP-dep_Trfase_small"/>
</dbReference>
<dbReference type="InterPro" id="IPR001085">
    <property type="entry name" value="Ser_HO-MeTrfase"/>
</dbReference>
<dbReference type="InterPro" id="IPR049943">
    <property type="entry name" value="Ser_HO-MeTrfase-like"/>
</dbReference>
<dbReference type="InterPro" id="IPR019798">
    <property type="entry name" value="Ser_HO-MeTrfase_PLP_BS"/>
</dbReference>
<dbReference type="InterPro" id="IPR039429">
    <property type="entry name" value="SHMT-like_dom"/>
</dbReference>
<dbReference type="NCBIfam" id="NF000586">
    <property type="entry name" value="PRK00011.1"/>
    <property type="match status" value="1"/>
</dbReference>
<dbReference type="PANTHER" id="PTHR11680">
    <property type="entry name" value="SERINE HYDROXYMETHYLTRANSFERASE"/>
    <property type="match status" value="1"/>
</dbReference>
<dbReference type="PANTHER" id="PTHR11680:SF35">
    <property type="entry name" value="SERINE HYDROXYMETHYLTRANSFERASE 1"/>
    <property type="match status" value="1"/>
</dbReference>
<dbReference type="Pfam" id="PF00464">
    <property type="entry name" value="SHMT"/>
    <property type="match status" value="1"/>
</dbReference>
<dbReference type="PIRSF" id="PIRSF000412">
    <property type="entry name" value="SHMT"/>
    <property type="match status" value="1"/>
</dbReference>
<dbReference type="SUPFAM" id="SSF53383">
    <property type="entry name" value="PLP-dependent transferases"/>
    <property type="match status" value="1"/>
</dbReference>
<dbReference type="PROSITE" id="PS00096">
    <property type="entry name" value="SHMT"/>
    <property type="match status" value="1"/>
</dbReference>